<protein>
    <recommendedName>
        <fullName evidence="3">V-type proton ATPase catalytic subunit A</fullName>
        <shortName evidence="3">V-ATPase subunit A</shortName>
        <ecNumber evidence="3">7.1.2.2</ecNumber>
    </recommendedName>
    <alternativeName>
        <fullName evidence="3">V-ATPase 69 kDa subunit</fullName>
    </alternativeName>
    <alternativeName>
        <fullName evidence="3">Vacuolar proton pump subunit alpha</fullName>
    </alternativeName>
</protein>
<evidence type="ECO:0000250" key="1">
    <source>
        <dbReference type="UniProtKB" id="P31404"/>
    </source>
</evidence>
<evidence type="ECO:0000250" key="2">
    <source>
        <dbReference type="UniProtKB" id="P38606"/>
    </source>
</evidence>
<evidence type="ECO:0000250" key="3">
    <source>
        <dbReference type="UniProtKB" id="P50516"/>
    </source>
</evidence>
<evidence type="ECO:0000255" key="4"/>
<evidence type="ECO:0000255" key="5">
    <source>
        <dbReference type="PROSITE-ProRule" id="PRU10106"/>
    </source>
</evidence>
<evidence type="ECO:0000305" key="6"/>
<organism>
    <name type="scientific">Mesocricetus auratus</name>
    <name type="common">Golden hamster</name>
    <dbReference type="NCBI Taxonomy" id="10036"/>
    <lineage>
        <taxon>Eukaryota</taxon>
        <taxon>Metazoa</taxon>
        <taxon>Chordata</taxon>
        <taxon>Craniata</taxon>
        <taxon>Vertebrata</taxon>
        <taxon>Euteleostomi</taxon>
        <taxon>Mammalia</taxon>
        <taxon>Eutheria</taxon>
        <taxon>Euarchontoglires</taxon>
        <taxon>Glires</taxon>
        <taxon>Rodentia</taxon>
        <taxon>Myomorpha</taxon>
        <taxon>Muroidea</taxon>
        <taxon>Cricetidae</taxon>
        <taxon>Cricetinae</taxon>
        <taxon>Mesocricetus</taxon>
    </lineage>
</organism>
<keyword id="KW-0067">ATP-binding</keyword>
<keyword id="KW-0963">Cytoplasm</keyword>
<keyword id="KW-0968">Cytoplasmic vesicle</keyword>
<keyword id="KW-0375">Hydrogen ion transport</keyword>
<keyword id="KW-0406">Ion transport</keyword>
<keyword id="KW-0458">Lysosome</keyword>
<keyword id="KW-0472">Membrane</keyword>
<keyword id="KW-0547">Nucleotide-binding</keyword>
<keyword id="KW-1185">Reference proteome</keyword>
<keyword id="KW-1278">Translocase</keyword>
<keyword id="KW-0813">Transport</keyword>
<reference key="1">
    <citation type="journal article" date="2010" name="Asian J. Androl.">
        <title>Glucose-regulated protein precursor (GRP78) and tumor rejection antigen (GP96) are unique to hamster caput epididymal spermatozoa.</title>
        <authorList>
            <person name="Kameshwari D.B."/>
            <person name="Bhande S."/>
            <person name="Sundaram C.S."/>
            <person name="Kota V."/>
            <person name="Siva A.B."/>
            <person name="Shivaji S."/>
        </authorList>
    </citation>
    <scope>IDENTIFICATION BY MASS SPECTROMETRY</scope>
</reference>
<proteinExistence type="evidence at protein level"/>
<gene>
    <name evidence="3" type="primary">ATP6V1A</name>
</gene>
<accession>P86205</accession>
<dbReference type="EC" id="7.1.2.2" evidence="3"/>
<dbReference type="Proteomes" id="UP000189706">
    <property type="component" value="Unplaced"/>
</dbReference>
<dbReference type="GO" id="GO:0030665">
    <property type="term" value="C:clathrin-coated vesicle membrane"/>
    <property type="evidence" value="ECO:0007669"/>
    <property type="project" value="UniProtKB-SubCell"/>
</dbReference>
<dbReference type="GO" id="GO:0005737">
    <property type="term" value="C:cytoplasm"/>
    <property type="evidence" value="ECO:0000250"/>
    <property type="project" value="UniProtKB"/>
</dbReference>
<dbReference type="GO" id="GO:0005829">
    <property type="term" value="C:cytosol"/>
    <property type="evidence" value="ECO:0007669"/>
    <property type="project" value="UniProtKB-SubCell"/>
</dbReference>
<dbReference type="GO" id="GO:0005765">
    <property type="term" value="C:lysosomal membrane"/>
    <property type="evidence" value="ECO:0007669"/>
    <property type="project" value="TreeGrafter"/>
</dbReference>
<dbReference type="GO" id="GO:0030133">
    <property type="term" value="C:transport vesicle"/>
    <property type="evidence" value="ECO:0007669"/>
    <property type="project" value="UniProtKB-SubCell"/>
</dbReference>
<dbReference type="GO" id="GO:0000221">
    <property type="term" value="C:vacuolar proton-transporting V-type ATPase, V1 domain"/>
    <property type="evidence" value="ECO:0000250"/>
    <property type="project" value="UniProtKB"/>
</dbReference>
<dbReference type="GO" id="GO:0005524">
    <property type="term" value="F:ATP binding"/>
    <property type="evidence" value="ECO:0007669"/>
    <property type="project" value="UniProtKB-KW"/>
</dbReference>
<dbReference type="GO" id="GO:0046961">
    <property type="term" value="F:proton-transporting ATPase activity, rotational mechanism"/>
    <property type="evidence" value="ECO:0000250"/>
    <property type="project" value="UniProtKB"/>
</dbReference>
<dbReference type="GO" id="GO:0046034">
    <property type="term" value="P:ATP metabolic process"/>
    <property type="evidence" value="ECO:0007669"/>
    <property type="project" value="InterPro"/>
</dbReference>
<dbReference type="Gene3D" id="3.40.50.300">
    <property type="entry name" value="P-loop containing nucleotide triphosphate hydrolases"/>
    <property type="match status" value="1"/>
</dbReference>
<dbReference type="InterPro" id="IPR020003">
    <property type="entry name" value="ATPase_a/bsu_AS"/>
</dbReference>
<dbReference type="InterPro" id="IPR000194">
    <property type="entry name" value="ATPase_F1/V1/A1_a/bsu_nucl-bd"/>
</dbReference>
<dbReference type="InterPro" id="IPR027417">
    <property type="entry name" value="P-loop_NTPase"/>
</dbReference>
<dbReference type="InterPro" id="IPR022878">
    <property type="entry name" value="V-ATPase_asu"/>
</dbReference>
<dbReference type="PANTHER" id="PTHR43607">
    <property type="entry name" value="V-TYPE PROTON ATPASE CATALYTIC SUBUNIT A"/>
    <property type="match status" value="1"/>
</dbReference>
<dbReference type="PANTHER" id="PTHR43607:SF9">
    <property type="entry name" value="V-TYPE PROTON ATPASE CATALYTIC SUBUNIT A"/>
    <property type="match status" value="1"/>
</dbReference>
<dbReference type="Pfam" id="PF00006">
    <property type="entry name" value="ATP-synt_ab"/>
    <property type="match status" value="1"/>
</dbReference>
<dbReference type="SUPFAM" id="SSF52540">
    <property type="entry name" value="P-loop containing nucleoside triphosphate hydrolases"/>
    <property type="match status" value="1"/>
</dbReference>
<dbReference type="PROSITE" id="PS00152">
    <property type="entry name" value="ATPASE_ALPHA_BETA"/>
    <property type="match status" value="1"/>
</dbReference>
<feature type="chain" id="PRO_0000394297" description="V-type proton ATPase catalytic subunit A">
    <location>
        <begin position="1" status="less than"/>
        <end position="174" status="greater than"/>
    </location>
</feature>
<feature type="non-consecutive residues" evidence="6">
    <location>
        <begin position="12"/>
        <end position="13"/>
    </location>
</feature>
<feature type="non-consecutive residues" evidence="6">
    <location>
        <begin position="21"/>
        <end position="22"/>
    </location>
</feature>
<feature type="non-consecutive residues" evidence="6">
    <location>
        <begin position="29"/>
        <end position="30"/>
    </location>
</feature>
<feature type="non-consecutive residues" evidence="6">
    <location>
        <begin position="39"/>
        <end position="40"/>
    </location>
</feature>
<feature type="non-consecutive residues" evidence="6">
    <location>
        <begin position="51"/>
        <end position="52"/>
    </location>
</feature>
<feature type="non-consecutive residues" evidence="6">
    <location>
        <begin position="82"/>
        <end position="83"/>
    </location>
</feature>
<feature type="non-consecutive residues" evidence="6">
    <location>
        <begin position="110"/>
        <end position="111"/>
    </location>
</feature>
<feature type="non-consecutive residues" evidence="6">
    <location>
        <begin position="124"/>
        <end position="125"/>
    </location>
</feature>
<feature type="non-consecutive residues" evidence="6">
    <location>
        <begin position="141"/>
        <end position="142"/>
    </location>
</feature>
<feature type="non-consecutive residues" evidence="6">
    <location>
        <begin position="157"/>
        <end position="158"/>
    </location>
</feature>
<feature type="non-terminal residue">
    <location>
        <position position="1"/>
    </location>
</feature>
<feature type="non-terminal residue">
    <location>
        <position position="174"/>
    </location>
</feature>
<name>VATA_MESAU</name>
<sequence>VGHSELVGEIIRGVNVSALSRHKIMLPPRFSMVQVWPVRLPANHPLLTGQRRTALVANTSNMPVAAREASIYTGITLSEYFRWAEALREISGRLAEMPADSGYPAYLGARKHFPSVNWLISYSKALDEYYDKHFTEFVPLRTVGMLSNMISFYDMARIKADYAQLLEDMQNAFR</sequence>
<comment type="function">
    <text evidence="2">Catalytic subunit of the V1 complex of vacuolar(H+)-ATPase (V-ATPase), a multisubunit enzyme composed of a peripheral complex (V1) that hydrolyzes ATP and a membrane integral complex (V0) that translocates protons (By similarity). V-ATPase is responsible for acidifying and maintaining the pH of intracellular compartments and in some cell types, is targeted to the plasma membrane, where it is responsible for acidifying the extracellular environment (By similarity). In aerobic conditions, involved in intracellular iron homeostasis, thus triggering the activity of Fe(2+) prolyl hydroxylase (PHD) enzymes, and leading to HIF1A hydroxylation and subsequent proteasomal degradation (By similarity). May play a role in neurite development and synaptic connectivity (By similarity).</text>
</comment>
<comment type="catalytic activity">
    <reaction evidence="3 5">
        <text>ATP + H2O + 4 H(+)(in) = ADP + phosphate + 5 H(+)(out)</text>
        <dbReference type="Rhea" id="RHEA:57720"/>
        <dbReference type="ChEBI" id="CHEBI:15377"/>
        <dbReference type="ChEBI" id="CHEBI:15378"/>
        <dbReference type="ChEBI" id="CHEBI:30616"/>
        <dbReference type="ChEBI" id="CHEBI:43474"/>
        <dbReference type="ChEBI" id="CHEBI:456216"/>
        <dbReference type="EC" id="7.1.2.2"/>
    </reaction>
</comment>
<comment type="activity regulation">
    <text evidence="1">ATP hydrolysis occurs at the interface between the nucleotide-binding domains of subunits A and B (By similarity). ATP hydrolysis triggers a conformational change in the subunits D and F, which induces a shift of subunit d (By similarity). The c-ring is subsequently rotated and results in a continuous proton translocation across the membrane (By similarity).</text>
</comment>
<comment type="subunit">
    <text evidence="2 3">V-ATPase is a heteromultimeric enzyme made up of two complexes: the ATP-hydrolytic V1 complex and the proton translocation V0 complex (By similarity). The V1 complex consists of three catalytic AB heterodimers that form a heterohexamer, three peripheral stalks each consisting of EG heterodimers, one central rotor including subunits D and F, and the regulatory subunits C and H (By similarity). The proton translocation complex V0 consists of the proton transport subunit a, a ring of proteolipid subunits c9c'', rotary subunit d, subunits e and f, and the accessory subunits ATP6AP1/Ac45 and ATP6AP2/PRR (By similarity). Interacts with the V0 complex V-ATPase subunit a4 ATP6V0A4 (By similarity). Interacts with WFS1 (By similarity). Interacts with alpha-crystallin B chain/CRYAB and with MTOR, forming a ternary complex (By similarity).</text>
</comment>
<comment type="subcellular location">
    <subcellularLocation>
        <location evidence="2">Cytoplasm</location>
    </subcellularLocation>
    <subcellularLocation>
        <location evidence="3">Cytoplasm</location>
        <location evidence="3">Cytosol</location>
    </subcellularLocation>
    <subcellularLocation>
        <location evidence="2">Cytoplasmic vesicle</location>
        <location evidence="2">Secretory vesicle</location>
    </subcellularLocation>
    <subcellularLocation>
        <location evidence="1">Cytoplasmic vesicle</location>
        <location evidence="1">Clathrin-coated vesicle membrane</location>
        <topology evidence="6">Peripheral membrane protein</topology>
    </subcellularLocation>
    <subcellularLocation>
        <location evidence="3">Lysosome</location>
    </subcellularLocation>
    <text evidence="2">Co-localizes with WFS1 in the secretory granules in neuroblastoma cell lines.</text>
</comment>
<comment type="similarity">
    <text evidence="4">Belongs to the ATPase alpha/beta chains family.</text>
</comment>